<accession>Q16WA6</accession>
<keyword id="KW-0067">ATP-binding</keyword>
<keyword id="KW-0507">mRNA processing</keyword>
<keyword id="KW-0547">Nucleotide-binding</keyword>
<keyword id="KW-0539">Nucleus</keyword>
<keyword id="KW-1185">Reference proteome</keyword>
<feature type="chain" id="PRO_0000375174" description="Protein CLP1 homolog">
    <location>
        <begin position="1"/>
        <end position="424"/>
    </location>
</feature>
<feature type="binding site" evidence="1">
    <location>
        <position position="19"/>
    </location>
    <ligand>
        <name>ATP</name>
        <dbReference type="ChEBI" id="CHEBI:30616"/>
    </ligand>
</feature>
<feature type="binding site" evidence="1">
    <location>
        <position position="60"/>
    </location>
    <ligand>
        <name>ATP</name>
        <dbReference type="ChEBI" id="CHEBI:30616"/>
    </ligand>
</feature>
<feature type="binding site" evidence="1">
    <location>
        <begin position="122"/>
        <end position="127"/>
    </location>
    <ligand>
        <name>ATP</name>
        <dbReference type="ChEBI" id="CHEBI:30616"/>
    </ligand>
</feature>
<sequence>MSDDQPGPRTEYKLETDSELRFEMENGNDKVTVTLLNGHAELYGTELVMKKPYEFGVGAKVAIFTYHGCTIELRGKPDVAYVARETPMVQYLNCNSALEHLRTKAEEDDVRGPVAMVVGPMDVGKSTLCRIFLNYAVRLGRRPIYVDLDVGQGGIAIPGTIGALLVERPAPVAEGFSQQAPLVYHFGHTNPSENDVFYDALITKLAETTLERLQANKRAKHSGMIINTCGWVKQGGYHHILHAAKEFEVNAIFVLDQERLYNELLRDVASKTVQVVYLPKSGGVVKRTRSQRAEARDNRIREYFYGSKMPLYPHSFDVKFSDVKIFKVGSPALPDSCLPLGMKKEDNFTKLVAVQPSMQLLHHILAVSFAESIEENVIQSNVAGFICVTDVNMEKEVLTILSPQPRPLPQTILLVSDLQFMDSH</sequence>
<gene>
    <name type="primary">cbc</name>
    <name type="ORF">AAEL009302</name>
</gene>
<organism>
    <name type="scientific">Aedes aegypti</name>
    <name type="common">Yellowfever mosquito</name>
    <name type="synonym">Culex aegypti</name>
    <dbReference type="NCBI Taxonomy" id="7159"/>
    <lineage>
        <taxon>Eukaryota</taxon>
        <taxon>Metazoa</taxon>
        <taxon>Ecdysozoa</taxon>
        <taxon>Arthropoda</taxon>
        <taxon>Hexapoda</taxon>
        <taxon>Insecta</taxon>
        <taxon>Pterygota</taxon>
        <taxon>Neoptera</taxon>
        <taxon>Endopterygota</taxon>
        <taxon>Diptera</taxon>
        <taxon>Nematocera</taxon>
        <taxon>Culicoidea</taxon>
        <taxon>Culicidae</taxon>
        <taxon>Culicinae</taxon>
        <taxon>Aedini</taxon>
        <taxon>Aedes</taxon>
        <taxon>Stegomyia</taxon>
    </lineage>
</organism>
<dbReference type="EMBL" id="CH477572">
    <property type="protein sequence ID" value="EAT38844.1"/>
    <property type="molecule type" value="Genomic_DNA"/>
</dbReference>
<dbReference type="RefSeq" id="XP_001659890.1">
    <property type="nucleotide sequence ID" value="XM_001659840.1"/>
</dbReference>
<dbReference type="SMR" id="Q16WA6"/>
<dbReference type="FunCoup" id="Q16WA6">
    <property type="interactions" value="1468"/>
</dbReference>
<dbReference type="STRING" id="7159.Q16WA6"/>
<dbReference type="PaxDb" id="7159-AAEL009302-PA"/>
<dbReference type="GeneID" id="5571757"/>
<dbReference type="KEGG" id="aag:5571757"/>
<dbReference type="CTD" id="36494"/>
<dbReference type="VEuPathDB" id="VectorBase:AAEL009302"/>
<dbReference type="eggNOG" id="KOG2749">
    <property type="taxonomic scope" value="Eukaryota"/>
</dbReference>
<dbReference type="HOGENOM" id="CLU_018195_1_0_1"/>
<dbReference type="InParanoid" id="Q16WA6"/>
<dbReference type="OMA" id="VQYVNCH"/>
<dbReference type="OrthoDB" id="258143at2759"/>
<dbReference type="PhylomeDB" id="Q16WA6"/>
<dbReference type="Proteomes" id="UP000008820">
    <property type="component" value="Unassembled WGS sequence"/>
</dbReference>
<dbReference type="Proteomes" id="UP000682892">
    <property type="component" value="Unassembled WGS sequence"/>
</dbReference>
<dbReference type="GO" id="GO:0005849">
    <property type="term" value="C:mRNA cleavage factor complex"/>
    <property type="evidence" value="ECO:0007669"/>
    <property type="project" value="InterPro"/>
</dbReference>
<dbReference type="GO" id="GO:0005524">
    <property type="term" value="F:ATP binding"/>
    <property type="evidence" value="ECO:0007669"/>
    <property type="project" value="UniProtKB-UniRule"/>
</dbReference>
<dbReference type="GO" id="GO:0051731">
    <property type="term" value="F:polynucleotide 5'-hydroxyl-kinase activity"/>
    <property type="evidence" value="ECO:0007669"/>
    <property type="project" value="InterPro"/>
</dbReference>
<dbReference type="GO" id="GO:0031124">
    <property type="term" value="P:mRNA 3'-end processing"/>
    <property type="evidence" value="ECO:0007669"/>
    <property type="project" value="UniProtKB-UniRule"/>
</dbReference>
<dbReference type="GO" id="GO:0006388">
    <property type="term" value="P:tRNA splicing, via endonucleolytic cleavage and ligation"/>
    <property type="evidence" value="ECO:0007669"/>
    <property type="project" value="TreeGrafter"/>
</dbReference>
<dbReference type="CDD" id="cd01983">
    <property type="entry name" value="SIMIBI"/>
    <property type="match status" value="1"/>
</dbReference>
<dbReference type="FunFam" id="2.40.30.330:FF:000001">
    <property type="entry name" value="Protein CLP1 homolog"/>
    <property type="match status" value="1"/>
</dbReference>
<dbReference type="FunFam" id="3.40.50.300:FF:000454">
    <property type="entry name" value="Protein CLP1 homolog"/>
    <property type="match status" value="1"/>
</dbReference>
<dbReference type="FunFam" id="2.60.120.1030:FF:000001">
    <property type="entry name" value="Protein CLP1 homolog 5"/>
    <property type="match status" value="1"/>
</dbReference>
<dbReference type="Gene3D" id="2.60.120.1030">
    <property type="entry name" value="Clp1, DNA binding domain"/>
    <property type="match status" value="1"/>
</dbReference>
<dbReference type="Gene3D" id="3.40.50.300">
    <property type="entry name" value="P-loop containing nucleotide triphosphate hydrolases"/>
    <property type="match status" value="1"/>
</dbReference>
<dbReference type="Gene3D" id="2.40.30.330">
    <property type="entry name" value="Pre-mRNA cleavage complex subunit Clp1, C-terminal domain"/>
    <property type="match status" value="1"/>
</dbReference>
<dbReference type="HAMAP" id="MF_03035">
    <property type="entry name" value="Clp1"/>
    <property type="match status" value="1"/>
</dbReference>
<dbReference type="InterPro" id="IPR028606">
    <property type="entry name" value="Clp1"/>
</dbReference>
<dbReference type="InterPro" id="IPR045116">
    <property type="entry name" value="Clp1/Grc3"/>
</dbReference>
<dbReference type="InterPro" id="IPR010655">
    <property type="entry name" value="Clp1_C"/>
</dbReference>
<dbReference type="InterPro" id="IPR038238">
    <property type="entry name" value="Clp1_C_sf"/>
</dbReference>
<dbReference type="InterPro" id="IPR032324">
    <property type="entry name" value="Clp1_N"/>
</dbReference>
<dbReference type="InterPro" id="IPR038239">
    <property type="entry name" value="Clp1_N_sf"/>
</dbReference>
<dbReference type="InterPro" id="IPR032319">
    <property type="entry name" value="CLP1_P"/>
</dbReference>
<dbReference type="InterPro" id="IPR027417">
    <property type="entry name" value="P-loop_NTPase"/>
</dbReference>
<dbReference type="PANTHER" id="PTHR12755">
    <property type="entry name" value="CLEAVAGE/POLYADENYLATION FACTOR IA SUBUNIT CLP1P"/>
    <property type="match status" value="1"/>
</dbReference>
<dbReference type="PANTHER" id="PTHR12755:SF6">
    <property type="entry name" value="POLYRIBONUCLEOTIDE 5'-HYDROXYL-KINASE CLP1"/>
    <property type="match status" value="1"/>
</dbReference>
<dbReference type="Pfam" id="PF06807">
    <property type="entry name" value="Clp1"/>
    <property type="match status" value="1"/>
</dbReference>
<dbReference type="Pfam" id="PF16573">
    <property type="entry name" value="CLP1_N"/>
    <property type="match status" value="1"/>
</dbReference>
<dbReference type="Pfam" id="PF16575">
    <property type="entry name" value="CLP1_P"/>
    <property type="match status" value="1"/>
</dbReference>
<dbReference type="SUPFAM" id="SSF52540">
    <property type="entry name" value="P-loop containing nucleoside triphosphate hydrolases"/>
    <property type="match status" value="1"/>
</dbReference>
<name>CLP1_AEDAE</name>
<reference key="1">
    <citation type="journal article" date="2007" name="Science">
        <title>Genome sequence of Aedes aegypti, a major arbovirus vector.</title>
        <authorList>
            <person name="Nene V."/>
            <person name="Wortman J.R."/>
            <person name="Lawson D."/>
            <person name="Haas B.J."/>
            <person name="Kodira C.D."/>
            <person name="Tu Z.J."/>
            <person name="Loftus B.J."/>
            <person name="Xi Z."/>
            <person name="Megy K."/>
            <person name="Grabherr M."/>
            <person name="Ren Q."/>
            <person name="Zdobnov E.M."/>
            <person name="Lobo N.F."/>
            <person name="Campbell K.S."/>
            <person name="Brown S.E."/>
            <person name="Bonaldo M.F."/>
            <person name="Zhu J."/>
            <person name="Sinkins S.P."/>
            <person name="Hogenkamp D.G."/>
            <person name="Amedeo P."/>
            <person name="Arensburger P."/>
            <person name="Atkinson P.W."/>
            <person name="Bidwell S.L."/>
            <person name="Biedler J."/>
            <person name="Birney E."/>
            <person name="Bruggner R.V."/>
            <person name="Costas J."/>
            <person name="Coy M.R."/>
            <person name="Crabtree J."/>
            <person name="Crawford M."/>
            <person name="DeBruyn B."/>
            <person name="DeCaprio D."/>
            <person name="Eiglmeier K."/>
            <person name="Eisenstadt E."/>
            <person name="El-Dorry H."/>
            <person name="Gelbart W.M."/>
            <person name="Gomes S.L."/>
            <person name="Hammond M."/>
            <person name="Hannick L.I."/>
            <person name="Hogan J.R."/>
            <person name="Holmes M.H."/>
            <person name="Jaffe D."/>
            <person name="Johnston S.J."/>
            <person name="Kennedy R.C."/>
            <person name="Koo H."/>
            <person name="Kravitz S."/>
            <person name="Kriventseva E.V."/>
            <person name="Kulp D."/>
            <person name="Labutti K."/>
            <person name="Lee E."/>
            <person name="Li S."/>
            <person name="Lovin D.D."/>
            <person name="Mao C."/>
            <person name="Mauceli E."/>
            <person name="Menck C.F."/>
            <person name="Miller J.R."/>
            <person name="Montgomery P."/>
            <person name="Mori A."/>
            <person name="Nascimento A.L."/>
            <person name="Naveira H.F."/>
            <person name="Nusbaum C."/>
            <person name="O'Leary S.B."/>
            <person name="Orvis J."/>
            <person name="Pertea M."/>
            <person name="Quesneville H."/>
            <person name="Reidenbach K.R."/>
            <person name="Rogers Y.-H.C."/>
            <person name="Roth C.W."/>
            <person name="Schneider J.R."/>
            <person name="Schatz M."/>
            <person name="Shumway M."/>
            <person name="Stanke M."/>
            <person name="Stinson E.O."/>
            <person name="Tubio J.M.C."/>
            <person name="Vanzee J.P."/>
            <person name="Verjovski-Almeida S."/>
            <person name="Werner D."/>
            <person name="White O.R."/>
            <person name="Wyder S."/>
            <person name="Zeng Q."/>
            <person name="Zhao Q."/>
            <person name="Zhao Y."/>
            <person name="Hill C.A."/>
            <person name="Raikhel A.S."/>
            <person name="Soares M.B."/>
            <person name="Knudson D.L."/>
            <person name="Lee N.H."/>
            <person name="Galagan J."/>
            <person name="Salzberg S.L."/>
            <person name="Paulsen I.T."/>
            <person name="Dimopoulos G."/>
            <person name="Collins F.H."/>
            <person name="Bruce B."/>
            <person name="Fraser-Liggett C.M."/>
            <person name="Severson D.W."/>
        </authorList>
    </citation>
    <scope>NUCLEOTIDE SEQUENCE [LARGE SCALE GENOMIC DNA]</scope>
    <source>
        <strain>LVPib12</strain>
    </source>
</reference>
<comment type="function">
    <text evidence="1">Required for endonucleolytic cleavage during polyadenylation-dependent pre-mRNA 3'-end formation.</text>
</comment>
<comment type="subcellular location">
    <subcellularLocation>
        <location evidence="1">Nucleus</location>
    </subcellularLocation>
</comment>
<comment type="similarity">
    <text evidence="1">Belongs to the Clp1 family. Clp1 subfamily.</text>
</comment>
<proteinExistence type="inferred from homology"/>
<evidence type="ECO:0000255" key="1">
    <source>
        <dbReference type="HAMAP-Rule" id="MF_03035"/>
    </source>
</evidence>
<protein>
    <recommendedName>
        <fullName evidence="1">Protein CLP1 homolog</fullName>
    </recommendedName>
</protein>